<protein>
    <recommendedName>
        <fullName>Apolipoprotein F</fullName>
        <shortName>Apo-F</shortName>
    </recommendedName>
    <alternativeName>
        <fullName>Leukemia virus-inactivating factor</fullName>
        <shortName>LVIF</shortName>
    </alternativeName>
</protein>
<accession>Q91V80</accession>
<organism>
    <name type="scientific">Mus musculus</name>
    <name type="common">Mouse</name>
    <dbReference type="NCBI Taxonomy" id="10090"/>
    <lineage>
        <taxon>Eukaryota</taxon>
        <taxon>Metazoa</taxon>
        <taxon>Chordata</taxon>
        <taxon>Craniata</taxon>
        <taxon>Vertebrata</taxon>
        <taxon>Euteleostomi</taxon>
        <taxon>Mammalia</taxon>
        <taxon>Eutheria</taxon>
        <taxon>Euarchontoglires</taxon>
        <taxon>Glires</taxon>
        <taxon>Rodentia</taxon>
        <taxon>Myomorpha</taxon>
        <taxon>Muroidea</taxon>
        <taxon>Muridae</taxon>
        <taxon>Murinae</taxon>
        <taxon>Mus</taxon>
        <taxon>Mus</taxon>
    </lineage>
</organism>
<gene>
    <name type="primary">Apof</name>
    <name type="synonym">Lvif</name>
</gene>
<keyword id="KW-0153">Cholesterol metabolism</keyword>
<keyword id="KW-0165">Cleavage on pair of basic residues</keyword>
<keyword id="KW-0345">HDL</keyword>
<keyword id="KW-0427">LDL</keyword>
<keyword id="KW-0443">Lipid metabolism</keyword>
<keyword id="KW-0445">Lipid transport</keyword>
<keyword id="KW-1185">Reference proteome</keyword>
<keyword id="KW-0964">Secreted</keyword>
<keyword id="KW-0732">Signal</keyword>
<keyword id="KW-0753">Steroid metabolism</keyword>
<keyword id="KW-1207">Sterol metabolism</keyword>
<keyword id="KW-0813">Transport</keyword>
<comment type="function">
    <text evidence="1">Minor apolipoprotein that associates with LDL. Inhibits cholesteryl ester transfer protein (CETP) activity and appears to be an important regulator of cholesterol transport. Also associates to a lesser degree with VLDL, Apo-AI and Apo-AII.</text>
</comment>
<comment type="subcellular location">
    <subcellularLocation>
        <location evidence="1">Secreted</location>
    </subcellularLocation>
</comment>
<comment type="tissue specificity">
    <text evidence="3">Liver.</text>
</comment>
<comment type="similarity">
    <text evidence="4">Belongs to the apolipoprotein F family.</text>
</comment>
<comment type="sequence caution" evidence="4">
    <conflict type="erroneous initiation">
        <sequence resource="EMBL-CDS" id="AAH10815"/>
    </conflict>
</comment>
<comment type="sequence caution" evidence="4">
    <conflict type="erroneous initiation">
        <sequence resource="EMBL-CDS" id="AAH22795"/>
    </conflict>
</comment>
<comment type="sequence caution" evidence="4">
    <conflict type="erroneous initiation">
        <sequence resource="EMBL-CDS" id="AAH24769"/>
    </conflict>
</comment>
<comment type="sequence caution" evidence="4">
    <conflict type="erroneous initiation">
        <sequence resource="EMBL-CDS" id="AAH25827"/>
    </conflict>
</comment>
<comment type="sequence caution" evidence="4">
    <conflict type="erroneous initiation">
        <sequence resource="EMBL-CDS" id="AAL06339"/>
    </conflict>
</comment>
<comment type="sequence caution" evidence="4">
    <conflict type="erroneous initiation">
        <sequence resource="EMBL-CDS" id="AAL06340"/>
    </conflict>
</comment>
<comment type="sequence caution" evidence="4">
    <conflict type="erroneous initiation">
        <sequence resource="EMBL-CDS" id="AAL06341"/>
    </conflict>
</comment>
<name>APOF_MOUSE</name>
<feature type="signal peptide" evidence="2">
    <location>
        <begin position="1"/>
        <end position="24"/>
    </location>
</feature>
<feature type="propeptide" id="PRO_0000002053" evidence="2">
    <location>
        <begin position="25"/>
        <end position="154"/>
    </location>
</feature>
<feature type="chain" id="PRO_0000002054" description="Apolipoprotein F">
    <location>
        <begin position="155"/>
        <end position="315"/>
    </location>
</feature>
<dbReference type="EMBL" id="AF411830">
    <property type="protein sequence ID" value="AAL06339.1"/>
    <property type="status" value="ALT_INIT"/>
    <property type="molecule type" value="Genomic_DNA"/>
</dbReference>
<dbReference type="EMBL" id="AF411831">
    <property type="protein sequence ID" value="AAL06340.1"/>
    <property type="status" value="ALT_INIT"/>
    <property type="molecule type" value="Genomic_DNA"/>
</dbReference>
<dbReference type="EMBL" id="AF411832">
    <property type="protein sequence ID" value="AAL06341.1"/>
    <property type="status" value="ALT_INIT"/>
    <property type="molecule type" value="Genomic_DNA"/>
</dbReference>
<dbReference type="EMBL" id="BC010815">
    <property type="protein sequence ID" value="AAH10815.1"/>
    <property type="status" value="ALT_INIT"/>
    <property type="molecule type" value="mRNA"/>
</dbReference>
<dbReference type="EMBL" id="BC022795">
    <property type="protein sequence ID" value="AAH22795.1"/>
    <property type="status" value="ALT_INIT"/>
    <property type="molecule type" value="mRNA"/>
</dbReference>
<dbReference type="EMBL" id="BC024769">
    <property type="protein sequence ID" value="AAH24769.1"/>
    <property type="status" value="ALT_INIT"/>
    <property type="molecule type" value="mRNA"/>
</dbReference>
<dbReference type="EMBL" id="BC025827">
    <property type="protein sequence ID" value="AAH25827.1"/>
    <property type="status" value="ALT_INIT"/>
    <property type="molecule type" value="mRNA"/>
</dbReference>
<dbReference type="CCDS" id="CCDS24268.2"/>
<dbReference type="RefSeq" id="NP_598758.2">
    <property type="nucleotide sequence ID" value="NM_133997.3"/>
</dbReference>
<dbReference type="FunCoup" id="Q91V80">
    <property type="interactions" value="383"/>
</dbReference>
<dbReference type="STRING" id="10090.ENSMUSP00000158988"/>
<dbReference type="iPTMnet" id="Q91V80"/>
<dbReference type="PhosphoSitePlus" id="Q91V80"/>
<dbReference type="CPTAC" id="non-CPTAC-3959"/>
<dbReference type="PaxDb" id="10090-ENSMUSP00000050300"/>
<dbReference type="PeptideAtlas" id="Q91V80"/>
<dbReference type="ProteomicsDB" id="281900"/>
<dbReference type="Antibodypedia" id="28188">
    <property type="antibodies" value="297 antibodies from 33 providers"/>
</dbReference>
<dbReference type="DNASU" id="103161"/>
<dbReference type="Ensembl" id="ENSMUST00000050901.5">
    <property type="protein sequence ID" value="ENSMUSP00000050300.4"/>
    <property type="gene ID" value="ENSMUSG00000047631.5"/>
</dbReference>
<dbReference type="GeneID" id="103161"/>
<dbReference type="KEGG" id="mmu:103161"/>
<dbReference type="UCSC" id="uc007hlz.1">
    <property type="organism name" value="mouse"/>
</dbReference>
<dbReference type="AGR" id="MGI:104539"/>
<dbReference type="CTD" id="319"/>
<dbReference type="MGI" id="MGI:104539">
    <property type="gene designation" value="Apof"/>
</dbReference>
<dbReference type="VEuPathDB" id="HostDB:ENSMUSG00000047631"/>
<dbReference type="eggNOG" id="ENOG502QUQ0">
    <property type="taxonomic scope" value="Eukaryota"/>
</dbReference>
<dbReference type="GeneTree" id="ENSGT00500000045104"/>
<dbReference type="InParanoid" id="Q91V80"/>
<dbReference type="OMA" id="FTHMAPL"/>
<dbReference type="OrthoDB" id="9895613at2759"/>
<dbReference type="PhylomeDB" id="Q91V80"/>
<dbReference type="TreeFam" id="TF338778"/>
<dbReference type="BioGRID-ORCS" id="103161">
    <property type="hits" value="3 hits in 81 CRISPR screens"/>
</dbReference>
<dbReference type="ChiTaRS" id="Apof">
    <property type="organism name" value="mouse"/>
</dbReference>
<dbReference type="PRO" id="PR:Q91V80"/>
<dbReference type="Proteomes" id="UP000000589">
    <property type="component" value="Chromosome 10"/>
</dbReference>
<dbReference type="RNAct" id="Q91V80">
    <property type="molecule type" value="protein"/>
</dbReference>
<dbReference type="Bgee" id="ENSMUSG00000047631">
    <property type="expression patterns" value="Expressed in left lobe of liver and 39 other cell types or tissues"/>
</dbReference>
<dbReference type="ExpressionAtlas" id="Q91V80">
    <property type="expression patterns" value="baseline and differential"/>
</dbReference>
<dbReference type="GO" id="GO:0005615">
    <property type="term" value="C:extracellular space"/>
    <property type="evidence" value="ECO:0000250"/>
    <property type="project" value="UniProtKB"/>
</dbReference>
<dbReference type="GO" id="GO:0034364">
    <property type="term" value="C:high-density lipoprotein particle"/>
    <property type="evidence" value="ECO:0007669"/>
    <property type="project" value="UniProtKB-KW"/>
</dbReference>
<dbReference type="GO" id="GO:0034362">
    <property type="term" value="C:low-density lipoprotein particle"/>
    <property type="evidence" value="ECO:0007669"/>
    <property type="project" value="UniProtKB-KW"/>
</dbReference>
<dbReference type="GO" id="GO:0033344">
    <property type="term" value="P:cholesterol efflux"/>
    <property type="evidence" value="ECO:0000316"/>
    <property type="project" value="MGI"/>
</dbReference>
<dbReference type="GO" id="GO:0008203">
    <property type="term" value="P:cholesterol metabolic process"/>
    <property type="evidence" value="ECO:0000315"/>
    <property type="project" value="MGI"/>
</dbReference>
<dbReference type="GO" id="GO:0006641">
    <property type="term" value="P:triglyceride metabolic process"/>
    <property type="evidence" value="ECO:0000315"/>
    <property type="project" value="MGI"/>
</dbReference>
<dbReference type="InterPro" id="IPR026114">
    <property type="entry name" value="APOF"/>
</dbReference>
<dbReference type="PANTHER" id="PTHR15011">
    <property type="entry name" value="APOLIPOPROTEIN F"/>
    <property type="match status" value="1"/>
</dbReference>
<dbReference type="PANTHER" id="PTHR15011:SF3">
    <property type="entry name" value="APOLIPOPROTEIN F"/>
    <property type="match status" value="1"/>
</dbReference>
<dbReference type="Pfam" id="PF15148">
    <property type="entry name" value="Apolipo_F"/>
    <property type="match status" value="1"/>
</dbReference>
<sequence length="315" mass="34359">MHSLRLILMSIQLLCYLLLCPVDATSHGEATSVSTVLPPSKLGYQMQTSDKPLSCQMLLPKSLPGFTYMPPVSKFLVGLALRNALEAAGCQAEVWALQLQLYRLGGVEATQALIHHLQELQKSGHTDREVSVDALSSALQLLAWEQPGPKRAKRSISNTDCDNDQEQSVHNVVDLLPAVGTYYNLGTALYYAIKNCSDKAKERGRDGAIDLGYDLLMAMVGASGGPAGAVITAALKPAMKAGVQRLIQYYYDEKEVTTPQPEVTTHQPETGKDATTDIGVVEEIAMSNFVSEVESTTSNWEWPLLKNYGVLAYKR</sequence>
<evidence type="ECO:0000250" key="1">
    <source>
        <dbReference type="UniProtKB" id="Q13790"/>
    </source>
</evidence>
<evidence type="ECO:0000255" key="2"/>
<evidence type="ECO:0000269" key="3">
    <source>
    </source>
</evidence>
<evidence type="ECO:0000305" key="4"/>
<proteinExistence type="evidence at transcript level"/>
<reference key="1">
    <citation type="journal article" date="2002" name="J. Virol.">
        <title>Genetic control of a mouse serum lipoprotein factor that inactivates murine leukemia viruses: evaluation of apolipoprotein F as a candidate.</title>
        <authorList>
            <person name="Wu T."/>
            <person name="Lee C.G."/>
            <person name="Buckler-White A."/>
            <person name="Kozak C.A."/>
        </authorList>
    </citation>
    <scope>NUCLEOTIDE SEQUENCE [GENOMIC DNA]</scope>
    <scope>TISSUE SPECIFICITY</scope>
    <source>
        <strain>C58/J</strain>
        <strain>CAST/EiJ</strain>
        <strain>NFS</strain>
    </source>
</reference>
<reference key="2">
    <citation type="journal article" date="2004" name="Genome Res.">
        <title>The status, quality, and expansion of the NIH full-length cDNA project: the Mammalian Gene Collection (MGC).</title>
        <authorList>
            <consortium name="The MGC Project Team"/>
        </authorList>
    </citation>
    <scope>NUCLEOTIDE SEQUENCE [LARGE SCALE MRNA]</scope>
    <source>
        <strain>FVB/N</strain>
        <tissue>Liver</tissue>
    </source>
</reference>